<dbReference type="EMBL" id="U26542">
    <property type="protein sequence ID" value="AAA96006.1"/>
    <property type="molecule type" value="Genomic_DNA"/>
</dbReference>
<dbReference type="EMBL" id="U26543">
    <property type="protein sequence ID" value="AAB60312.1"/>
    <property type="molecule type" value="mRNA"/>
</dbReference>
<dbReference type="EMBL" id="AL132962">
    <property type="protein sequence ID" value="CAB71081.1"/>
    <property type="molecule type" value="Genomic_DNA"/>
</dbReference>
<dbReference type="EMBL" id="CP002686">
    <property type="protein sequence ID" value="AEE80216.1"/>
    <property type="molecule type" value="Genomic_DNA"/>
</dbReference>
<dbReference type="EMBL" id="AY133715">
    <property type="protein sequence ID" value="AAM91649.1"/>
    <property type="molecule type" value="mRNA"/>
</dbReference>
<dbReference type="EMBL" id="Z12615">
    <property type="protein sequence ID" value="CAA78261.1"/>
    <property type="molecule type" value="mRNA"/>
</dbReference>
<dbReference type="PIR" id="B47199">
    <property type="entry name" value="B47199"/>
</dbReference>
<dbReference type="PIR" id="T47943">
    <property type="entry name" value="T47943"/>
</dbReference>
<dbReference type="RefSeq" id="NP_191710.1">
    <property type="nucleotide sequence ID" value="NM_116016.2"/>
</dbReference>
<dbReference type="SMR" id="Q06429"/>
<dbReference type="FunCoup" id="Q06429">
    <property type="interactions" value="400"/>
</dbReference>
<dbReference type="IntAct" id="Q06429">
    <property type="interactions" value="1"/>
</dbReference>
<dbReference type="STRING" id="3702.Q06429"/>
<dbReference type="PaxDb" id="3702-AT3G61510.1"/>
<dbReference type="ProteomicsDB" id="244490"/>
<dbReference type="EnsemblPlants" id="AT3G61510.1">
    <property type="protein sequence ID" value="AT3G61510.1"/>
    <property type="gene ID" value="AT3G61510"/>
</dbReference>
<dbReference type="GeneID" id="825324"/>
<dbReference type="Gramene" id="AT3G61510.1">
    <property type="protein sequence ID" value="AT3G61510.1"/>
    <property type="gene ID" value="AT3G61510"/>
</dbReference>
<dbReference type="KEGG" id="ath:AT3G61510"/>
<dbReference type="Araport" id="AT3G61510"/>
<dbReference type="TAIR" id="AT3G61510">
    <property type="gene designation" value="ACS1"/>
</dbReference>
<dbReference type="eggNOG" id="KOG0256">
    <property type="taxonomic scope" value="Eukaryota"/>
</dbReference>
<dbReference type="HOGENOM" id="CLU_017584_1_0_1"/>
<dbReference type="InParanoid" id="Q06429"/>
<dbReference type="OMA" id="YPAFYRD"/>
<dbReference type="PhylomeDB" id="Q06429"/>
<dbReference type="BioCyc" id="ARA:AT3G61510-MONOMER"/>
<dbReference type="PRO" id="PR:Q06429"/>
<dbReference type="Proteomes" id="UP000006548">
    <property type="component" value="Chromosome 3"/>
</dbReference>
<dbReference type="ExpressionAtlas" id="Q06429">
    <property type="expression patterns" value="baseline and differential"/>
</dbReference>
<dbReference type="GO" id="GO:0003824">
    <property type="term" value="F:catalytic activity"/>
    <property type="evidence" value="ECO:0007669"/>
    <property type="project" value="InterPro"/>
</dbReference>
<dbReference type="GO" id="GO:0030170">
    <property type="term" value="F:pyridoxal phosphate binding"/>
    <property type="evidence" value="ECO:0007669"/>
    <property type="project" value="InterPro"/>
</dbReference>
<dbReference type="GO" id="GO:0009058">
    <property type="term" value="P:biosynthetic process"/>
    <property type="evidence" value="ECO:0007669"/>
    <property type="project" value="InterPro"/>
</dbReference>
<dbReference type="CDD" id="cd00609">
    <property type="entry name" value="AAT_like"/>
    <property type="match status" value="1"/>
</dbReference>
<dbReference type="Gene3D" id="3.90.1150.10">
    <property type="entry name" value="Aspartate Aminotransferase, domain 1"/>
    <property type="match status" value="1"/>
</dbReference>
<dbReference type="Gene3D" id="3.40.640.10">
    <property type="entry name" value="Type I PLP-dependent aspartate aminotransferase-like (Major domain)"/>
    <property type="match status" value="1"/>
</dbReference>
<dbReference type="InterPro" id="IPR004839">
    <property type="entry name" value="Aminotransferase_I/II_large"/>
</dbReference>
<dbReference type="InterPro" id="IPR050478">
    <property type="entry name" value="Ethylene_sulfur-biosynth"/>
</dbReference>
<dbReference type="InterPro" id="IPR004838">
    <property type="entry name" value="NHTrfase_class1_PyrdxlP-BS"/>
</dbReference>
<dbReference type="InterPro" id="IPR015424">
    <property type="entry name" value="PyrdxlP-dep_Trfase"/>
</dbReference>
<dbReference type="InterPro" id="IPR015421">
    <property type="entry name" value="PyrdxlP-dep_Trfase_major"/>
</dbReference>
<dbReference type="InterPro" id="IPR015422">
    <property type="entry name" value="PyrdxlP-dep_Trfase_small"/>
</dbReference>
<dbReference type="PANTHER" id="PTHR43795:SF74">
    <property type="entry name" value="1-AMINOCYCLOPROPANE-1-CARBOXYLATE SYNTHASE-LIKE PROTEIN 1"/>
    <property type="match status" value="1"/>
</dbReference>
<dbReference type="PANTHER" id="PTHR43795">
    <property type="entry name" value="BIFUNCTIONAL ASPARTATE AMINOTRANSFERASE AND GLUTAMATE/ASPARTATE-PREPHENATE AMINOTRANSFERASE-RELATED"/>
    <property type="match status" value="1"/>
</dbReference>
<dbReference type="Pfam" id="PF00155">
    <property type="entry name" value="Aminotran_1_2"/>
    <property type="match status" value="1"/>
</dbReference>
<dbReference type="PRINTS" id="PR00753">
    <property type="entry name" value="ACCSYNTHASE"/>
</dbReference>
<dbReference type="SUPFAM" id="SSF53383">
    <property type="entry name" value="PLP-dependent transferases"/>
    <property type="match status" value="1"/>
</dbReference>
<dbReference type="PROSITE" id="PS00105">
    <property type="entry name" value="AA_TRANSFER_CLASS_1"/>
    <property type="match status" value="1"/>
</dbReference>
<sequence>MSQGACENQLLSKLALSDKHGEASPYFHGWKAYDNNPFHPTHNPQGVIQMGLAENQLCSDLIKEWIKENPQASICTAEGIDSFSDIAVFQDYHGLKQFRQAIATFMERARGGRVRFEAERVVMSGGATGANETIMFCLADPGDAFLVPTPYYAAFDRDLRWRTGVRIIPVECSSSNNFQITKQALESAYLKAQETGIKIKGLIISNPLGTSLDRETLESLVSFINDKQIHLVCDEIYAATVFAEPGFISVAEIIQEMYYVNRDLIHIVYSLSKDMGLPGFRVGVVYSYNDVVVSCARRMSSFGLVSSQTQSFLAAMLSDQSFVDNFLVEVSKRVAKRHHMFTEGLEEMGISCLRSNAGLFVLMDLRHMLKDQTFDSEMALWRVIINKVKINVSPGSSFHCSEPGWFRVCFANMDEDTLQIALERIKDFVVGDRANKNKNCNCICNNKRENKKRKSFQKNLKLSLSSMRYEEHVRSPKLMSPHSPLLRA</sequence>
<protein>
    <recommendedName>
        <fullName>1-aminocyclopropane-1-carboxylate synthase-like protein 1</fullName>
    </recommendedName>
</protein>
<proteinExistence type="evidence at protein level"/>
<evidence type="ECO:0000250" key="1"/>
<evidence type="ECO:0000269" key="2">
    <source>
    </source>
</evidence>
<evidence type="ECO:0000269" key="3">
    <source>
    </source>
</evidence>
<evidence type="ECO:0000305" key="4"/>
<feature type="chain" id="PRO_0000123896" description="1-aminocyclopropane-1-carboxylate synthase-like protein 1">
    <location>
        <begin position="1"/>
        <end position="488"/>
    </location>
</feature>
<feature type="modified residue" description="N6-(pyridoxal phosphate)lysine" evidence="1">
    <location>
        <position position="273"/>
    </location>
</feature>
<feature type="mutagenesis site" description="Restores ACS activity; when expressed in E.coli." evidence="3">
    <original>S</original>
    <variation>TNPS</variation>
    <location>
        <position position="205"/>
    </location>
</feature>
<gene>
    <name type="primary">ACS1</name>
    <name type="synonym">ACC2</name>
    <name type="ordered locus">At3g61510</name>
    <name type="ORF">F2A19.110</name>
</gene>
<organism>
    <name type="scientific">Arabidopsis thaliana</name>
    <name type="common">Mouse-ear cress</name>
    <dbReference type="NCBI Taxonomy" id="3702"/>
    <lineage>
        <taxon>Eukaryota</taxon>
        <taxon>Viridiplantae</taxon>
        <taxon>Streptophyta</taxon>
        <taxon>Embryophyta</taxon>
        <taxon>Tracheophyta</taxon>
        <taxon>Spermatophyta</taxon>
        <taxon>Magnoliopsida</taxon>
        <taxon>eudicotyledons</taxon>
        <taxon>Gunneridae</taxon>
        <taxon>Pentapetalae</taxon>
        <taxon>rosids</taxon>
        <taxon>malvids</taxon>
        <taxon>Brassicales</taxon>
        <taxon>Brassicaceae</taxon>
        <taxon>Camelineae</taxon>
        <taxon>Arabidopsis</taxon>
    </lineage>
</organism>
<keyword id="KW-0663">Pyridoxal phosphate</keyword>
<keyword id="KW-1185">Reference proteome</keyword>
<accession>Q06429</accession>
<accession>Q43368</accession>
<accession>Q9S9C6</accession>
<comment type="subunit">
    <text evidence="1">Homodimer.</text>
</comment>
<comment type="tissue specificity">
    <text evidence="2">Expressed in young leaves and flowers. Not expressed in roots.</text>
</comment>
<comment type="similarity">
    <text evidence="4">Belongs to the class-I pyridoxal-phosphate-dependent aminotransferase family.</text>
</comment>
<comment type="caution">
    <text evidence="4">Lacks the conserved tripeptide Ser/Thr-Asn-Pro in position 205 necessary for the ACS activity.</text>
</comment>
<reference key="1">
    <citation type="journal article" date="1995" name="Gene">
        <title>Characterization of two members (ACS1 and ACS3) of the 1-aminocyclopropane-1-carboxylate synthase gene family of Arabidopsis thaliana.</title>
        <authorList>
            <person name="Liang X.-W."/>
            <person name="Oono Y."/>
            <person name="Shen N.F."/>
            <person name="Koehler C."/>
            <person name="Li K."/>
            <person name="Scolnik P.A."/>
            <person name="Theologis A."/>
        </authorList>
    </citation>
    <scope>NUCLEOTIDE SEQUENCE [GENOMIC DNA / MRNA]</scope>
    <scope>LACK OF ENZYME ACTIVITY</scope>
    <scope>MUTAGENESIS OF SER-205</scope>
    <source>
        <strain>cv. Columbia</strain>
    </source>
</reference>
<reference key="2">
    <citation type="journal article" date="2000" name="Nature">
        <title>Sequence and analysis of chromosome 3 of the plant Arabidopsis thaliana.</title>
        <authorList>
            <person name="Salanoubat M."/>
            <person name="Lemcke K."/>
            <person name="Rieger M."/>
            <person name="Ansorge W."/>
            <person name="Unseld M."/>
            <person name="Fartmann B."/>
            <person name="Valle G."/>
            <person name="Bloecker H."/>
            <person name="Perez-Alonso M."/>
            <person name="Obermaier B."/>
            <person name="Delseny M."/>
            <person name="Boutry M."/>
            <person name="Grivell L.A."/>
            <person name="Mache R."/>
            <person name="Puigdomenech P."/>
            <person name="De Simone V."/>
            <person name="Choisne N."/>
            <person name="Artiguenave F."/>
            <person name="Robert C."/>
            <person name="Brottier P."/>
            <person name="Wincker P."/>
            <person name="Cattolico L."/>
            <person name="Weissenbach J."/>
            <person name="Saurin W."/>
            <person name="Quetier F."/>
            <person name="Schaefer M."/>
            <person name="Mueller-Auer S."/>
            <person name="Gabel C."/>
            <person name="Fuchs M."/>
            <person name="Benes V."/>
            <person name="Wurmbach E."/>
            <person name="Drzonek H."/>
            <person name="Erfle H."/>
            <person name="Jordan N."/>
            <person name="Bangert S."/>
            <person name="Wiedelmann R."/>
            <person name="Kranz H."/>
            <person name="Voss H."/>
            <person name="Holland R."/>
            <person name="Brandt P."/>
            <person name="Nyakatura G."/>
            <person name="Vezzi A."/>
            <person name="D'Angelo M."/>
            <person name="Pallavicini A."/>
            <person name="Toppo S."/>
            <person name="Simionati B."/>
            <person name="Conrad A."/>
            <person name="Hornischer K."/>
            <person name="Kauer G."/>
            <person name="Loehnert T.-H."/>
            <person name="Nordsiek G."/>
            <person name="Reichelt J."/>
            <person name="Scharfe M."/>
            <person name="Schoen O."/>
            <person name="Bargues M."/>
            <person name="Terol J."/>
            <person name="Climent J."/>
            <person name="Navarro P."/>
            <person name="Collado C."/>
            <person name="Perez-Perez A."/>
            <person name="Ottenwaelder B."/>
            <person name="Duchemin D."/>
            <person name="Cooke R."/>
            <person name="Laudie M."/>
            <person name="Berger-Llauro C."/>
            <person name="Purnelle B."/>
            <person name="Masuy D."/>
            <person name="de Haan M."/>
            <person name="Maarse A.C."/>
            <person name="Alcaraz J.-P."/>
            <person name="Cottet A."/>
            <person name="Casacuberta E."/>
            <person name="Monfort A."/>
            <person name="Argiriou A."/>
            <person name="Flores M."/>
            <person name="Liguori R."/>
            <person name="Vitale D."/>
            <person name="Mannhaupt G."/>
            <person name="Haase D."/>
            <person name="Schoof H."/>
            <person name="Rudd S."/>
            <person name="Zaccaria P."/>
            <person name="Mewes H.-W."/>
            <person name="Mayer K.F.X."/>
            <person name="Kaul S."/>
            <person name="Town C.D."/>
            <person name="Koo H.L."/>
            <person name="Tallon L.J."/>
            <person name="Jenkins J."/>
            <person name="Rooney T."/>
            <person name="Rizzo M."/>
            <person name="Walts A."/>
            <person name="Utterback T."/>
            <person name="Fujii C.Y."/>
            <person name="Shea T.P."/>
            <person name="Creasy T.H."/>
            <person name="Haas B."/>
            <person name="Maiti R."/>
            <person name="Wu D."/>
            <person name="Peterson J."/>
            <person name="Van Aken S."/>
            <person name="Pai G."/>
            <person name="Militscher J."/>
            <person name="Sellers P."/>
            <person name="Gill J.E."/>
            <person name="Feldblyum T.V."/>
            <person name="Preuss D."/>
            <person name="Lin X."/>
            <person name="Nierman W.C."/>
            <person name="Salzberg S.L."/>
            <person name="White O."/>
            <person name="Venter J.C."/>
            <person name="Fraser C.M."/>
            <person name="Kaneko T."/>
            <person name="Nakamura Y."/>
            <person name="Sato S."/>
            <person name="Kato T."/>
            <person name="Asamizu E."/>
            <person name="Sasamoto S."/>
            <person name="Kimura T."/>
            <person name="Idesawa K."/>
            <person name="Kawashima K."/>
            <person name="Kishida Y."/>
            <person name="Kiyokawa C."/>
            <person name="Kohara M."/>
            <person name="Matsumoto M."/>
            <person name="Matsuno A."/>
            <person name="Muraki A."/>
            <person name="Nakayama S."/>
            <person name="Nakazaki N."/>
            <person name="Shinpo S."/>
            <person name="Takeuchi C."/>
            <person name="Wada T."/>
            <person name="Watanabe A."/>
            <person name="Yamada M."/>
            <person name="Yasuda M."/>
            <person name="Tabata S."/>
        </authorList>
    </citation>
    <scope>NUCLEOTIDE SEQUENCE [LARGE SCALE GENOMIC DNA]</scope>
    <source>
        <strain>cv. Columbia</strain>
    </source>
</reference>
<reference key="3">
    <citation type="journal article" date="2017" name="Plant J.">
        <title>Araport11: a complete reannotation of the Arabidopsis thaliana reference genome.</title>
        <authorList>
            <person name="Cheng C.Y."/>
            <person name="Krishnakumar V."/>
            <person name="Chan A.P."/>
            <person name="Thibaud-Nissen F."/>
            <person name="Schobel S."/>
            <person name="Town C.D."/>
        </authorList>
    </citation>
    <scope>GENOME REANNOTATION</scope>
    <source>
        <strain>cv. Columbia</strain>
    </source>
</reference>
<reference key="4">
    <citation type="journal article" date="2003" name="Science">
        <title>Empirical analysis of transcriptional activity in the Arabidopsis genome.</title>
        <authorList>
            <person name="Yamada K."/>
            <person name="Lim J."/>
            <person name="Dale J.M."/>
            <person name="Chen H."/>
            <person name="Shinn P."/>
            <person name="Palm C.J."/>
            <person name="Southwick A.M."/>
            <person name="Wu H.C."/>
            <person name="Kim C.J."/>
            <person name="Nguyen M."/>
            <person name="Pham P.K."/>
            <person name="Cheuk R.F."/>
            <person name="Karlin-Newmann G."/>
            <person name="Liu S.X."/>
            <person name="Lam B."/>
            <person name="Sakano H."/>
            <person name="Wu T."/>
            <person name="Yu G."/>
            <person name="Miranda M."/>
            <person name="Quach H.L."/>
            <person name="Tripp M."/>
            <person name="Chang C.H."/>
            <person name="Lee J.M."/>
            <person name="Toriumi M.J."/>
            <person name="Chan M.M."/>
            <person name="Tang C.C."/>
            <person name="Onodera C.S."/>
            <person name="Deng J.M."/>
            <person name="Akiyama K."/>
            <person name="Ansari Y."/>
            <person name="Arakawa T."/>
            <person name="Banh J."/>
            <person name="Banno F."/>
            <person name="Bowser L."/>
            <person name="Brooks S.Y."/>
            <person name="Carninci P."/>
            <person name="Chao Q."/>
            <person name="Choy N."/>
            <person name="Enju A."/>
            <person name="Goldsmith A.D."/>
            <person name="Gurjal M."/>
            <person name="Hansen N.F."/>
            <person name="Hayashizaki Y."/>
            <person name="Johnson-Hopson C."/>
            <person name="Hsuan V.W."/>
            <person name="Iida K."/>
            <person name="Karnes M."/>
            <person name="Khan S."/>
            <person name="Koesema E."/>
            <person name="Ishida J."/>
            <person name="Jiang P.X."/>
            <person name="Jones T."/>
            <person name="Kawai J."/>
            <person name="Kamiya A."/>
            <person name="Meyers C."/>
            <person name="Nakajima M."/>
            <person name="Narusaka M."/>
            <person name="Seki M."/>
            <person name="Sakurai T."/>
            <person name="Satou M."/>
            <person name="Tamse R."/>
            <person name="Vaysberg M."/>
            <person name="Wallender E.K."/>
            <person name="Wong C."/>
            <person name="Yamamura Y."/>
            <person name="Yuan S."/>
            <person name="Shinozaki K."/>
            <person name="Davis R.W."/>
            <person name="Theologis A."/>
            <person name="Ecker J.R."/>
        </authorList>
    </citation>
    <scope>NUCLEOTIDE SEQUENCE [LARGE SCALE MRNA]</scope>
    <source>
        <strain>cv. Columbia</strain>
    </source>
</reference>
<reference key="5">
    <citation type="journal article" date="1992" name="Proc. Natl. Acad. Sci. U.S.A.">
        <title>The 1-aminocyclopropane-1-carboxylate synthase gene family of Arabidopsis thaliana.</title>
        <authorList>
            <person name="Liang X.-W."/>
            <person name="Abel S."/>
            <person name="Keller J.A."/>
            <person name="Shen N.F."/>
            <person name="Theologis A."/>
        </authorList>
    </citation>
    <scope>NUCLEOTIDE SEQUENCE OF 57-88</scope>
</reference>
<reference key="6">
    <citation type="journal article" date="1992" name="Proc. Natl. Acad. Sci. U.S.A.">
        <title>Cloning, genetic mapping, and expression analysis of an Arabidopsis thaliana gene that encodes 1-aminocyclopropane-1-carboxylate synthase.</title>
        <authorList>
            <person name="van der Straeten D."/>
            <person name="Rodrigues-Pousada R.A."/>
            <person name="Villarroel R."/>
            <person name="Hanley S."/>
            <person name="Goodman H.M."/>
            <person name="Van Montagu M."/>
        </authorList>
    </citation>
    <scope>NUCLEOTIDE SEQUENCE [MRNA] OF 100-152</scope>
    <source>
        <strain>cv. C24</strain>
        <tissue>Flower</tissue>
    </source>
</reference>
<reference key="7">
    <citation type="journal article" date="2003" name="J. Biol. Chem.">
        <title>Biochemical diversity among the 1-amino-cyclopropane-1-carboxylate synthase isozymes encoded by the Arabidopsis gene family.</title>
        <authorList>
            <person name="Yamagami T."/>
            <person name="Tsuchisaka A."/>
            <person name="Yamada K."/>
            <person name="Haddon W.F."/>
            <person name="Harden L.A."/>
            <person name="Theologis A."/>
        </authorList>
    </citation>
    <scope>TISSUE SPECIFICITY</scope>
</reference>
<name>1A11_ARATH</name>